<gene>
    <name evidence="1" type="primary">astD</name>
    <name type="ordered locus">Bcep1808_1102</name>
</gene>
<comment type="function">
    <text evidence="1">Catalyzes the NAD-dependent reduction of succinylglutamate semialdehyde into succinylglutamate.</text>
</comment>
<comment type="catalytic activity">
    <reaction evidence="1">
        <text>N-succinyl-L-glutamate 5-semialdehyde + NAD(+) + H2O = N-succinyl-L-glutamate + NADH + 2 H(+)</text>
        <dbReference type="Rhea" id="RHEA:10812"/>
        <dbReference type="ChEBI" id="CHEBI:15377"/>
        <dbReference type="ChEBI" id="CHEBI:15378"/>
        <dbReference type="ChEBI" id="CHEBI:57540"/>
        <dbReference type="ChEBI" id="CHEBI:57945"/>
        <dbReference type="ChEBI" id="CHEBI:58520"/>
        <dbReference type="ChEBI" id="CHEBI:58763"/>
        <dbReference type="EC" id="1.2.1.71"/>
    </reaction>
</comment>
<comment type="pathway">
    <text evidence="1">Amino-acid degradation; L-arginine degradation via AST pathway; L-glutamate and succinate from L-arginine: step 4/5.</text>
</comment>
<comment type="similarity">
    <text evidence="1">Belongs to the aldehyde dehydrogenase family. AstD subfamily.</text>
</comment>
<evidence type="ECO:0000255" key="1">
    <source>
        <dbReference type="HAMAP-Rule" id="MF_01174"/>
    </source>
</evidence>
<proteinExistence type="inferred from homology"/>
<sequence length="487" mass="51895">MTELFIDGAWVAGSGPVFASRNPGTDAIAWQGASASAADVERAVASARRAFAGWSALDFDARCEIVKRFAALLTERKEALAAAIGRETGKPLWEARTEVAAMAAKVAISIQAYHERTGEKRQDMADGVAVLRHRPHGVVAVFGPYNFPGHLPNGHIVPALIAGNTVVFKPSELAPGVARATVEVWHEAGLPAGVLNLVQGEKDTGIALANHRQIDGLFFTGSSDTGTLLHKQFGGRPEIVLALEMGGNNPLVIGAVEDIDAAVHHTIQSAFLSAGQRCTCARRIFVPQGAHGERFLARLVDVTSKITADVFDADPQPFMGAVISARAAAKLVDAQARLIEQGARPIIEMTQRDARLGFVNASIIDVTDVARLPDEEHFGPLAQIVRYARFDEAIERANDTAFGLSAGLLSDDAHAWEQFRRTIRAGIVNWNRPTNGASSAAPFGGTGRSGNHRPSAYYAADYCAYPMASVESTQLSLPASLSPGLHF</sequence>
<dbReference type="EC" id="1.2.1.71" evidence="1"/>
<dbReference type="EMBL" id="CP000614">
    <property type="protein sequence ID" value="ABO54113.1"/>
    <property type="molecule type" value="Genomic_DNA"/>
</dbReference>
<dbReference type="SMR" id="A4JCW0"/>
<dbReference type="KEGG" id="bvi:Bcep1808_1102"/>
<dbReference type="eggNOG" id="COG1012">
    <property type="taxonomic scope" value="Bacteria"/>
</dbReference>
<dbReference type="HOGENOM" id="CLU_005391_1_0_4"/>
<dbReference type="UniPathway" id="UPA00185">
    <property type="reaction ID" value="UER00282"/>
</dbReference>
<dbReference type="Proteomes" id="UP000002287">
    <property type="component" value="Chromosome 1"/>
</dbReference>
<dbReference type="GO" id="GO:0043824">
    <property type="term" value="F:succinylglutamate-semialdehyde dehydrogenase activity"/>
    <property type="evidence" value="ECO:0007669"/>
    <property type="project" value="UniProtKB-EC"/>
</dbReference>
<dbReference type="GO" id="GO:0019544">
    <property type="term" value="P:arginine catabolic process to glutamate"/>
    <property type="evidence" value="ECO:0007669"/>
    <property type="project" value="UniProtKB-UniRule"/>
</dbReference>
<dbReference type="GO" id="GO:0019545">
    <property type="term" value="P:arginine catabolic process to succinate"/>
    <property type="evidence" value="ECO:0007669"/>
    <property type="project" value="UniProtKB-UniRule"/>
</dbReference>
<dbReference type="CDD" id="cd07095">
    <property type="entry name" value="ALDH_SGSD_AstD"/>
    <property type="match status" value="1"/>
</dbReference>
<dbReference type="FunFam" id="3.40.605.10:FF:000010">
    <property type="entry name" value="N-succinylglutamate 5-semialdehyde dehydrogenase"/>
    <property type="match status" value="1"/>
</dbReference>
<dbReference type="Gene3D" id="3.40.605.10">
    <property type="entry name" value="Aldehyde Dehydrogenase, Chain A, domain 1"/>
    <property type="match status" value="1"/>
</dbReference>
<dbReference type="Gene3D" id="3.40.309.10">
    <property type="entry name" value="Aldehyde Dehydrogenase, Chain A, domain 2"/>
    <property type="match status" value="1"/>
</dbReference>
<dbReference type="HAMAP" id="MF_01174">
    <property type="entry name" value="Aldedh_AstD"/>
    <property type="match status" value="1"/>
</dbReference>
<dbReference type="InterPro" id="IPR016161">
    <property type="entry name" value="Ald_DH/histidinol_DH"/>
</dbReference>
<dbReference type="InterPro" id="IPR016163">
    <property type="entry name" value="Ald_DH_C"/>
</dbReference>
<dbReference type="InterPro" id="IPR016160">
    <property type="entry name" value="Ald_DH_CS_CYS"/>
</dbReference>
<dbReference type="InterPro" id="IPR029510">
    <property type="entry name" value="Ald_DH_CS_GLU"/>
</dbReference>
<dbReference type="InterPro" id="IPR016162">
    <property type="entry name" value="Ald_DH_N"/>
</dbReference>
<dbReference type="InterPro" id="IPR015590">
    <property type="entry name" value="Aldehyde_DH_dom"/>
</dbReference>
<dbReference type="InterPro" id="IPR017649">
    <property type="entry name" value="SuccinylGlu_semiald_DH_AstD"/>
</dbReference>
<dbReference type="NCBIfam" id="TIGR03240">
    <property type="entry name" value="arg_catab_astD"/>
    <property type="match status" value="1"/>
</dbReference>
<dbReference type="NCBIfam" id="NF006992">
    <property type="entry name" value="PRK09457.1"/>
    <property type="match status" value="1"/>
</dbReference>
<dbReference type="PANTHER" id="PTHR11699">
    <property type="entry name" value="ALDEHYDE DEHYDROGENASE-RELATED"/>
    <property type="match status" value="1"/>
</dbReference>
<dbReference type="Pfam" id="PF00171">
    <property type="entry name" value="Aldedh"/>
    <property type="match status" value="1"/>
</dbReference>
<dbReference type="SUPFAM" id="SSF53720">
    <property type="entry name" value="ALDH-like"/>
    <property type="match status" value="1"/>
</dbReference>
<dbReference type="PROSITE" id="PS00070">
    <property type="entry name" value="ALDEHYDE_DEHYDR_CYS"/>
    <property type="match status" value="1"/>
</dbReference>
<dbReference type="PROSITE" id="PS00687">
    <property type="entry name" value="ALDEHYDE_DEHYDR_GLU"/>
    <property type="match status" value="1"/>
</dbReference>
<feature type="chain" id="PRO_1000065752" description="N-succinylglutamate 5-semialdehyde dehydrogenase">
    <location>
        <begin position="1"/>
        <end position="487"/>
    </location>
</feature>
<feature type="active site" evidence="1">
    <location>
        <position position="244"/>
    </location>
</feature>
<feature type="active site" evidence="1">
    <location>
        <position position="278"/>
    </location>
</feature>
<feature type="binding site" evidence="1">
    <location>
        <begin position="221"/>
        <end position="226"/>
    </location>
    <ligand>
        <name>NAD(+)</name>
        <dbReference type="ChEBI" id="CHEBI:57540"/>
    </ligand>
</feature>
<keyword id="KW-0056">Arginine metabolism</keyword>
<keyword id="KW-0520">NAD</keyword>
<keyword id="KW-0560">Oxidoreductase</keyword>
<organism>
    <name type="scientific">Burkholderia vietnamiensis (strain G4 / LMG 22486)</name>
    <name type="common">Burkholderia cepacia (strain R1808)</name>
    <dbReference type="NCBI Taxonomy" id="269482"/>
    <lineage>
        <taxon>Bacteria</taxon>
        <taxon>Pseudomonadati</taxon>
        <taxon>Pseudomonadota</taxon>
        <taxon>Betaproteobacteria</taxon>
        <taxon>Burkholderiales</taxon>
        <taxon>Burkholderiaceae</taxon>
        <taxon>Burkholderia</taxon>
        <taxon>Burkholderia cepacia complex</taxon>
    </lineage>
</organism>
<name>ASTD_BURVG</name>
<reference key="1">
    <citation type="submission" date="2007-03" db="EMBL/GenBank/DDBJ databases">
        <title>Complete sequence of chromosome 1 of Burkholderia vietnamiensis G4.</title>
        <authorList>
            <consortium name="US DOE Joint Genome Institute"/>
            <person name="Copeland A."/>
            <person name="Lucas S."/>
            <person name="Lapidus A."/>
            <person name="Barry K."/>
            <person name="Detter J.C."/>
            <person name="Glavina del Rio T."/>
            <person name="Hammon N."/>
            <person name="Israni S."/>
            <person name="Dalin E."/>
            <person name="Tice H."/>
            <person name="Pitluck S."/>
            <person name="Chain P."/>
            <person name="Malfatti S."/>
            <person name="Shin M."/>
            <person name="Vergez L."/>
            <person name="Schmutz J."/>
            <person name="Larimer F."/>
            <person name="Land M."/>
            <person name="Hauser L."/>
            <person name="Kyrpides N."/>
            <person name="Tiedje J."/>
            <person name="Richardson P."/>
        </authorList>
    </citation>
    <scope>NUCLEOTIDE SEQUENCE [LARGE SCALE GENOMIC DNA]</scope>
    <source>
        <strain>G4 / LMG 22486</strain>
    </source>
</reference>
<protein>
    <recommendedName>
        <fullName evidence="1">N-succinylglutamate 5-semialdehyde dehydrogenase</fullName>
        <ecNumber evidence="1">1.2.1.71</ecNumber>
    </recommendedName>
    <alternativeName>
        <fullName evidence="1">Succinylglutamic semialdehyde dehydrogenase</fullName>
        <shortName evidence="1">SGSD</shortName>
    </alternativeName>
</protein>
<accession>A4JCW0</accession>